<keyword id="KW-0456">Lyase</keyword>
<keyword id="KW-0460">Magnesium</keyword>
<keyword id="KW-0464">Manganese</keyword>
<keyword id="KW-0479">Metal-binding</keyword>
<organism>
    <name type="scientific">Cereibacter sphaeroides (strain ATCC 17025 / ATH 2.4.3)</name>
    <name type="common">Rhodobacter sphaeroides</name>
    <dbReference type="NCBI Taxonomy" id="349102"/>
    <lineage>
        <taxon>Bacteria</taxon>
        <taxon>Pseudomonadati</taxon>
        <taxon>Pseudomonadota</taxon>
        <taxon>Alphaproteobacteria</taxon>
        <taxon>Rhodobacterales</taxon>
        <taxon>Paracoccaceae</taxon>
        <taxon>Cereibacter</taxon>
    </lineage>
</organism>
<feature type="initiator methionine" description="Removed" evidence="2">
    <location>
        <position position="1"/>
    </location>
</feature>
<feature type="chain" id="PRO_0000404702" description="L-malyl-CoA/beta-methylmalyl-CoA lyase">
    <location>
        <begin position="2"/>
        <end position="318"/>
    </location>
</feature>
<feature type="binding site" evidence="1">
    <location>
        <position position="19"/>
    </location>
    <ligand>
        <name>substrate</name>
    </ligand>
</feature>
<feature type="binding site" evidence="1">
    <location>
        <position position="24"/>
    </location>
    <ligand>
        <name>substrate</name>
    </ligand>
</feature>
<feature type="binding site" evidence="1">
    <location>
        <position position="30"/>
    </location>
    <ligand>
        <name>substrate</name>
    </ligand>
</feature>
<feature type="binding site" evidence="4">
    <location>
        <position position="76"/>
    </location>
    <ligand>
        <name>substrate</name>
    </ligand>
</feature>
<feature type="binding site" evidence="1">
    <location>
        <position position="141"/>
    </location>
    <ligand>
        <name>Mg(2+)</name>
        <dbReference type="ChEBI" id="CHEBI:18420"/>
    </ligand>
</feature>
<feature type="binding site" evidence="1">
    <location>
        <begin position="167"/>
        <end position="168"/>
    </location>
    <ligand>
        <name>substrate</name>
    </ligand>
</feature>
<feature type="binding site" evidence="1">
    <location>
        <position position="168"/>
    </location>
    <ligand>
        <name>Mg(2+)</name>
        <dbReference type="ChEBI" id="CHEBI:18420"/>
    </ligand>
</feature>
<feature type="binding site" evidence="1">
    <location>
        <begin position="251"/>
        <end position="252"/>
    </location>
    <ligand>
        <name>substrate</name>
    </ligand>
</feature>
<name>MCAL_CERS5</name>
<accession>A4WVF5</accession>
<gene>
    <name evidence="3" type="primary">mcl1</name>
    <name type="ordered locus">Rsph17025_2481</name>
</gene>
<dbReference type="EC" id="4.1.3.24"/>
<dbReference type="EMBL" id="CP000661">
    <property type="protein sequence ID" value="ABP71369.1"/>
    <property type="status" value="ALT_INIT"/>
    <property type="molecule type" value="Genomic_DNA"/>
</dbReference>
<dbReference type="SMR" id="A4WVF5"/>
<dbReference type="STRING" id="349102.Rsph17025_2481"/>
<dbReference type="KEGG" id="rsq:Rsph17025_2481"/>
<dbReference type="eggNOG" id="COG2301">
    <property type="taxonomic scope" value="Bacteria"/>
</dbReference>
<dbReference type="HOGENOM" id="CLU_044864_0_1_5"/>
<dbReference type="BioCyc" id="RSPH349102:G1G8M-2559-MONOMER"/>
<dbReference type="GO" id="GO:0043959">
    <property type="term" value="F:L-erythro-3-methylmalyl-CoA lyase activity"/>
    <property type="evidence" value="ECO:0007669"/>
    <property type="project" value="RHEA"/>
</dbReference>
<dbReference type="GO" id="GO:0000287">
    <property type="term" value="F:magnesium ion binding"/>
    <property type="evidence" value="ECO:0007669"/>
    <property type="project" value="TreeGrafter"/>
</dbReference>
<dbReference type="GO" id="GO:0050083">
    <property type="term" value="F:malyl-CoA lyase activity"/>
    <property type="evidence" value="ECO:0000250"/>
    <property type="project" value="UniProtKB"/>
</dbReference>
<dbReference type="GO" id="GO:0046872">
    <property type="term" value="F:metal ion binding"/>
    <property type="evidence" value="ECO:0000250"/>
    <property type="project" value="UniProtKB"/>
</dbReference>
<dbReference type="GO" id="GO:0006107">
    <property type="term" value="P:oxaloacetate metabolic process"/>
    <property type="evidence" value="ECO:0007669"/>
    <property type="project" value="TreeGrafter"/>
</dbReference>
<dbReference type="FunFam" id="3.20.20.60:FF:000020">
    <property type="entry name" value="Malyl-CoA lyase"/>
    <property type="match status" value="1"/>
</dbReference>
<dbReference type="Gene3D" id="3.20.20.60">
    <property type="entry name" value="Phosphoenolpyruvate-binding domains"/>
    <property type="match status" value="1"/>
</dbReference>
<dbReference type="InterPro" id="IPR005000">
    <property type="entry name" value="Aldolase/citrate-lyase_domain"/>
</dbReference>
<dbReference type="InterPro" id="IPR011206">
    <property type="entry name" value="Citrate_lyase_beta/mcl1/mcl2"/>
</dbReference>
<dbReference type="InterPro" id="IPR015813">
    <property type="entry name" value="Pyrv/PenolPyrv_kinase-like_dom"/>
</dbReference>
<dbReference type="InterPro" id="IPR040442">
    <property type="entry name" value="Pyrv_kinase-like_dom_sf"/>
</dbReference>
<dbReference type="PANTHER" id="PTHR32308:SF10">
    <property type="entry name" value="CITRATE LYASE SUBUNIT BETA"/>
    <property type="match status" value="1"/>
</dbReference>
<dbReference type="PANTHER" id="PTHR32308">
    <property type="entry name" value="LYASE BETA SUBUNIT, PUTATIVE (AFU_ORTHOLOGUE AFUA_4G13030)-RELATED"/>
    <property type="match status" value="1"/>
</dbReference>
<dbReference type="Pfam" id="PF03328">
    <property type="entry name" value="HpcH_HpaI"/>
    <property type="match status" value="1"/>
</dbReference>
<dbReference type="PIRSF" id="PIRSF015582">
    <property type="entry name" value="Cit_lyase_B"/>
    <property type="match status" value="1"/>
</dbReference>
<dbReference type="SUPFAM" id="SSF51621">
    <property type="entry name" value="Phosphoenolpyruvate/pyruvate domain"/>
    <property type="match status" value="1"/>
</dbReference>
<reference evidence="6" key="1">
    <citation type="submission" date="2007-04" db="EMBL/GenBank/DDBJ databases">
        <title>Complete sequence of chromosome of Rhodobacter sphaeroides ATCC 17025.</title>
        <authorList>
            <consortium name="US DOE Joint Genome Institute"/>
            <person name="Copeland A."/>
            <person name="Lucas S."/>
            <person name="Lapidus A."/>
            <person name="Barry K."/>
            <person name="Detter J.C."/>
            <person name="Glavina del Rio T."/>
            <person name="Hammon N."/>
            <person name="Israni S."/>
            <person name="Dalin E."/>
            <person name="Tice H."/>
            <person name="Pitluck S."/>
            <person name="Chertkov O."/>
            <person name="Brettin T."/>
            <person name="Bruce D."/>
            <person name="Han C."/>
            <person name="Schmutz J."/>
            <person name="Larimer F."/>
            <person name="Land M."/>
            <person name="Hauser L."/>
            <person name="Kyrpides N."/>
            <person name="Kim E."/>
            <person name="Richardson P."/>
            <person name="Mackenzie C."/>
            <person name="Choudhary M."/>
            <person name="Donohue T.J."/>
            <person name="Kaplan S."/>
        </authorList>
    </citation>
    <scope>NUCLEOTIDE SEQUENCE [LARGE SCALE GENOMIC DNA]</scope>
    <source>
        <strain>ATCC 17025 / ATH 2.4.3</strain>
    </source>
</reference>
<proteinExistence type="inferred from homology"/>
<evidence type="ECO:0000250" key="1"/>
<evidence type="ECO:0000250" key="2">
    <source>
        <dbReference type="UniProtKB" id="B6E2X2"/>
    </source>
</evidence>
<evidence type="ECO:0000250" key="3">
    <source>
        <dbReference type="UniProtKB" id="Q3J5L6"/>
    </source>
</evidence>
<evidence type="ECO:0000250" key="4">
    <source>
        <dbReference type="UniProtKB" id="Q9RUZ0"/>
    </source>
</evidence>
<evidence type="ECO:0000305" key="5"/>
<evidence type="ECO:0000312" key="6">
    <source>
        <dbReference type="EMBL" id="ABP71369.1"/>
    </source>
</evidence>
<protein>
    <recommendedName>
        <fullName evidence="3">L-malyl-CoA/beta-methylmalyl-CoA lyase</fullName>
        <ecNumber>4.1.3.24</ecNumber>
    </recommendedName>
    <alternativeName>
        <fullName evidence="3">(3S)-malyl-CoA/beta-methylmalyl-CoA lyase</fullName>
    </alternativeName>
</protein>
<sequence length="318" mass="34339">MSFRLQPPPPARPNRCQLFGPGSRPALFEKMAASAADVVNLDLEDSVAPDDKAQARLNIIEAINTLDWGKKYLSVRINGLDTPFWYRDVVDLLEQAGDRLDQIMIPKVGCAADVYAVDALVTAIERAKGRTKPVSFEVIIESAAGIAHVEEIAAASPRLQAMSLGAADFAASMGMQTTGIGGTQENYYMLHEGQKHWSDPWHWAQAAIVAACRTHGILPVDGPFGDFSDDEGFRAQARRSATLGMVGKWAIHPKQVALANEVFTPSDKAVAEAREILAAMEAAKARGEGATVYKGRLVDIASIKQAEVIVRQAEMISA</sequence>
<comment type="function">
    <text evidence="1">Involved in the ethylmalonyl-CoA pathway for acetate assimilation. Catalyzes the reversible condensation of glyoxylate and acetyl-CoA to L-malyl-CoA and the reversible condensation of glyoxylate and propionyl-CoA to yield beta-methylmalyl-CoA (By similarity).</text>
</comment>
<comment type="catalytic activity">
    <reaction>
        <text>(S)-malyl-CoA = glyoxylate + acetyl-CoA</text>
        <dbReference type="Rhea" id="RHEA:16629"/>
        <dbReference type="ChEBI" id="CHEBI:36655"/>
        <dbReference type="ChEBI" id="CHEBI:57288"/>
        <dbReference type="ChEBI" id="CHEBI:57317"/>
        <dbReference type="EC" id="4.1.3.24"/>
    </reaction>
</comment>
<comment type="catalytic activity">
    <reaction>
        <text>(2R,3S)-beta-methylmalyl-CoA = propanoyl-CoA + glyoxylate</text>
        <dbReference type="Rhea" id="RHEA:38259"/>
        <dbReference type="ChEBI" id="CHEBI:36655"/>
        <dbReference type="ChEBI" id="CHEBI:57392"/>
        <dbReference type="ChEBI" id="CHEBI:75634"/>
        <dbReference type="EC" id="4.1.3.24"/>
    </reaction>
</comment>
<comment type="cofactor">
    <cofactor evidence="1">
        <name>Mg(2+)</name>
        <dbReference type="ChEBI" id="CHEBI:18420"/>
    </cofactor>
    <cofactor evidence="1">
        <name>Mn(2+)</name>
        <dbReference type="ChEBI" id="CHEBI:29035"/>
    </cofactor>
    <text evidence="1">Divalent cations such as magnesium or manganese.</text>
</comment>
<comment type="subunit">
    <text evidence="1">Homohexamer. Dimer of trimers (By similarity).</text>
</comment>
<comment type="similarity">
    <text evidence="5">Belongs to the HpcH/HpaI aldolase family.</text>
</comment>
<comment type="sequence caution" evidence="5">
    <conflict type="erroneous initiation">
        <sequence resource="EMBL-CDS" id="ABP71369"/>
    </conflict>
    <text>Extended N-terminus.</text>
</comment>